<protein>
    <recommendedName>
        <fullName evidence="1">ADP-L-glycero-D-manno-heptose-6-epimerase</fullName>
        <ecNumber evidence="1">5.1.3.20</ecNumber>
    </recommendedName>
    <alternativeName>
        <fullName evidence="1">ADP-L-glycero-beta-D-manno-heptose-6-epimerase</fullName>
        <shortName evidence="1">ADP-glyceromanno-heptose 6-epimerase</shortName>
        <shortName evidence="1">ADP-hep 6-epimerase</shortName>
        <shortName evidence="1">AGME</shortName>
    </alternativeName>
</protein>
<feature type="chain" id="PRO_1000185791" description="ADP-L-glycero-D-manno-heptose-6-epimerase">
    <location>
        <begin position="1"/>
        <end position="310"/>
    </location>
</feature>
<feature type="active site" description="Proton acceptor" evidence="1">
    <location>
        <position position="140"/>
    </location>
</feature>
<feature type="active site" description="Proton acceptor" evidence="1">
    <location>
        <position position="178"/>
    </location>
</feature>
<feature type="binding site" evidence="1">
    <location>
        <begin position="10"/>
        <end position="11"/>
    </location>
    <ligand>
        <name>NADP(+)</name>
        <dbReference type="ChEBI" id="CHEBI:58349"/>
    </ligand>
</feature>
<feature type="binding site" evidence="1">
    <location>
        <begin position="31"/>
        <end position="32"/>
    </location>
    <ligand>
        <name>NADP(+)</name>
        <dbReference type="ChEBI" id="CHEBI:58349"/>
    </ligand>
</feature>
<feature type="binding site" evidence="1">
    <location>
        <position position="38"/>
    </location>
    <ligand>
        <name>NADP(+)</name>
        <dbReference type="ChEBI" id="CHEBI:58349"/>
    </ligand>
</feature>
<feature type="binding site" evidence="1">
    <location>
        <position position="53"/>
    </location>
    <ligand>
        <name>NADP(+)</name>
        <dbReference type="ChEBI" id="CHEBI:58349"/>
    </ligand>
</feature>
<feature type="binding site" evidence="1">
    <location>
        <begin position="75"/>
        <end position="79"/>
    </location>
    <ligand>
        <name>NADP(+)</name>
        <dbReference type="ChEBI" id="CHEBI:58349"/>
    </ligand>
</feature>
<feature type="binding site" evidence="1">
    <location>
        <position position="92"/>
    </location>
    <ligand>
        <name>NADP(+)</name>
        <dbReference type="ChEBI" id="CHEBI:58349"/>
    </ligand>
</feature>
<feature type="binding site" evidence="1">
    <location>
        <position position="144"/>
    </location>
    <ligand>
        <name>NADP(+)</name>
        <dbReference type="ChEBI" id="CHEBI:58349"/>
    </ligand>
</feature>
<feature type="binding site" evidence="1">
    <location>
        <position position="169"/>
    </location>
    <ligand>
        <name>substrate</name>
    </ligand>
</feature>
<feature type="binding site" evidence="1">
    <location>
        <position position="170"/>
    </location>
    <ligand>
        <name>NADP(+)</name>
        <dbReference type="ChEBI" id="CHEBI:58349"/>
    </ligand>
</feature>
<feature type="binding site" evidence="1">
    <location>
        <position position="178"/>
    </location>
    <ligand>
        <name>NADP(+)</name>
        <dbReference type="ChEBI" id="CHEBI:58349"/>
    </ligand>
</feature>
<feature type="binding site" evidence="1">
    <location>
        <position position="180"/>
    </location>
    <ligand>
        <name>substrate</name>
    </ligand>
</feature>
<feature type="binding site" evidence="1">
    <location>
        <position position="187"/>
    </location>
    <ligand>
        <name>substrate</name>
    </ligand>
</feature>
<feature type="binding site" evidence="1">
    <location>
        <begin position="201"/>
        <end position="204"/>
    </location>
    <ligand>
        <name>substrate</name>
    </ligand>
</feature>
<feature type="binding site" evidence="1">
    <location>
        <position position="209"/>
    </location>
    <ligand>
        <name>substrate</name>
    </ligand>
</feature>
<feature type="binding site" evidence="1">
    <location>
        <position position="272"/>
    </location>
    <ligand>
        <name>substrate</name>
    </ligand>
</feature>
<proteinExistence type="inferred from homology"/>
<accession>C0Q1V2</accession>
<gene>
    <name evidence="1" type="primary">hldD</name>
    <name type="ordered locus">SPC_3792</name>
</gene>
<organism>
    <name type="scientific">Salmonella paratyphi C (strain RKS4594)</name>
    <dbReference type="NCBI Taxonomy" id="476213"/>
    <lineage>
        <taxon>Bacteria</taxon>
        <taxon>Pseudomonadati</taxon>
        <taxon>Pseudomonadota</taxon>
        <taxon>Gammaproteobacteria</taxon>
        <taxon>Enterobacterales</taxon>
        <taxon>Enterobacteriaceae</taxon>
        <taxon>Salmonella</taxon>
    </lineage>
</organism>
<sequence length="310" mass="34777">MIIVTGGAGFIGSNIVKALNDKGITDILVVDNLKDGTKFVNLVDLNIADYMDKEDFLIQIMSGEELGDIEAIFHEGACSSTTEWDGKYMMDNNYQYSKELLHYCLERGIPFLYASSAATYGGRTSDFIESREYEKPLNVYGYSKFLFDEYVRQILPEANSQIVGFRYFNVYGPREGHKGSMASVAFHLNTQLNNGESPKLFEGSENFKRDFVYVGDVAAVNLWFLESGKSGIFNLGTGRAESFQAVADATLAYHKKGSIEYIPFPDKLKGRYQAFTQADLTNLRNAGYDKPFKTVAEGVTEYMAWLNRDA</sequence>
<dbReference type="EC" id="5.1.3.20" evidence="1"/>
<dbReference type="EMBL" id="CP000857">
    <property type="protein sequence ID" value="ACN47868.1"/>
    <property type="molecule type" value="Genomic_DNA"/>
</dbReference>
<dbReference type="SMR" id="C0Q1V2"/>
<dbReference type="KEGG" id="sei:SPC_3792"/>
<dbReference type="HOGENOM" id="CLU_007383_1_3_6"/>
<dbReference type="UniPathway" id="UPA00356">
    <property type="reaction ID" value="UER00440"/>
</dbReference>
<dbReference type="Proteomes" id="UP000001599">
    <property type="component" value="Chromosome"/>
</dbReference>
<dbReference type="GO" id="GO:0008712">
    <property type="term" value="F:ADP-glyceromanno-heptose 6-epimerase activity"/>
    <property type="evidence" value="ECO:0007669"/>
    <property type="project" value="UniProtKB-UniRule"/>
</dbReference>
<dbReference type="GO" id="GO:0050661">
    <property type="term" value="F:NADP binding"/>
    <property type="evidence" value="ECO:0007669"/>
    <property type="project" value="InterPro"/>
</dbReference>
<dbReference type="GO" id="GO:0097171">
    <property type="term" value="P:ADP-L-glycero-beta-D-manno-heptose biosynthetic process"/>
    <property type="evidence" value="ECO:0007669"/>
    <property type="project" value="UniProtKB-UniPathway"/>
</dbReference>
<dbReference type="GO" id="GO:0005975">
    <property type="term" value="P:carbohydrate metabolic process"/>
    <property type="evidence" value="ECO:0007669"/>
    <property type="project" value="UniProtKB-UniRule"/>
</dbReference>
<dbReference type="CDD" id="cd05248">
    <property type="entry name" value="ADP_GME_SDR_e"/>
    <property type="match status" value="1"/>
</dbReference>
<dbReference type="Gene3D" id="3.40.50.720">
    <property type="entry name" value="NAD(P)-binding Rossmann-like Domain"/>
    <property type="match status" value="1"/>
</dbReference>
<dbReference type="Gene3D" id="3.90.25.10">
    <property type="entry name" value="UDP-galactose 4-epimerase, domain 1"/>
    <property type="match status" value="1"/>
</dbReference>
<dbReference type="HAMAP" id="MF_01601">
    <property type="entry name" value="Heptose_epimerase"/>
    <property type="match status" value="1"/>
</dbReference>
<dbReference type="InterPro" id="IPR001509">
    <property type="entry name" value="Epimerase_deHydtase"/>
</dbReference>
<dbReference type="InterPro" id="IPR011912">
    <property type="entry name" value="Heptose_epim"/>
</dbReference>
<dbReference type="InterPro" id="IPR036291">
    <property type="entry name" value="NAD(P)-bd_dom_sf"/>
</dbReference>
<dbReference type="NCBIfam" id="TIGR02197">
    <property type="entry name" value="heptose_epim"/>
    <property type="match status" value="1"/>
</dbReference>
<dbReference type="NCBIfam" id="NF008360">
    <property type="entry name" value="PRK11150.1"/>
    <property type="match status" value="1"/>
</dbReference>
<dbReference type="PANTHER" id="PTHR43103:SF3">
    <property type="entry name" value="ADP-L-GLYCERO-D-MANNO-HEPTOSE-6-EPIMERASE"/>
    <property type="match status" value="1"/>
</dbReference>
<dbReference type="PANTHER" id="PTHR43103">
    <property type="entry name" value="NUCLEOSIDE-DIPHOSPHATE-SUGAR EPIMERASE"/>
    <property type="match status" value="1"/>
</dbReference>
<dbReference type="Pfam" id="PF01370">
    <property type="entry name" value="Epimerase"/>
    <property type="match status" value="1"/>
</dbReference>
<dbReference type="SUPFAM" id="SSF51735">
    <property type="entry name" value="NAD(P)-binding Rossmann-fold domains"/>
    <property type="match status" value="1"/>
</dbReference>
<comment type="function">
    <text evidence="1">Catalyzes the interconversion between ADP-D-glycero-beta-D-manno-heptose and ADP-L-glycero-beta-D-manno-heptose via an epimerization at carbon 6 of the heptose.</text>
</comment>
<comment type="catalytic activity">
    <reaction evidence="1">
        <text>ADP-D-glycero-beta-D-manno-heptose = ADP-L-glycero-beta-D-manno-heptose</text>
        <dbReference type="Rhea" id="RHEA:17577"/>
        <dbReference type="ChEBI" id="CHEBI:59967"/>
        <dbReference type="ChEBI" id="CHEBI:61506"/>
        <dbReference type="EC" id="5.1.3.20"/>
    </reaction>
</comment>
<comment type="cofactor">
    <cofactor evidence="1">
        <name>NADP(+)</name>
        <dbReference type="ChEBI" id="CHEBI:58349"/>
    </cofactor>
    <text evidence="1">Binds 1 NADP(+) per subunit.</text>
</comment>
<comment type="pathway">
    <text evidence="1">Nucleotide-sugar biosynthesis; ADP-L-glycero-beta-D-manno-heptose biosynthesis; ADP-L-glycero-beta-D-manno-heptose from D-glycero-beta-D-manno-heptose 7-phosphate: step 4/4.</text>
</comment>
<comment type="subunit">
    <text evidence="1">Homopentamer.</text>
</comment>
<comment type="domain">
    <text evidence="1">Contains a large N-terminal NADP-binding domain, and a smaller C-terminal substrate-binding domain.</text>
</comment>
<comment type="similarity">
    <text evidence="1">Belongs to the NAD(P)-dependent epimerase/dehydratase family. HldD subfamily.</text>
</comment>
<evidence type="ECO:0000255" key="1">
    <source>
        <dbReference type="HAMAP-Rule" id="MF_01601"/>
    </source>
</evidence>
<keyword id="KW-0119">Carbohydrate metabolism</keyword>
<keyword id="KW-0413">Isomerase</keyword>
<keyword id="KW-0521">NADP</keyword>
<name>HLDD_SALPC</name>
<reference key="1">
    <citation type="journal article" date="2009" name="PLoS ONE">
        <title>Salmonella paratyphi C: genetic divergence from Salmonella choleraesuis and pathogenic convergence with Salmonella typhi.</title>
        <authorList>
            <person name="Liu W.-Q."/>
            <person name="Feng Y."/>
            <person name="Wang Y."/>
            <person name="Zou Q.-H."/>
            <person name="Chen F."/>
            <person name="Guo J.-T."/>
            <person name="Peng Y.-H."/>
            <person name="Jin Y."/>
            <person name="Li Y.-G."/>
            <person name="Hu S.-N."/>
            <person name="Johnston R.N."/>
            <person name="Liu G.-R."/>
            <person name="Liu S.-L."/>
        </authorList>
    </citation>
    <scope>NUCLEOTIDE SEQUENCE [LARGE SCALE GENOMIC DNA]</scope>
    <source>
        <strain>RKS4594</strain>
    </source>
</reference>